<name>ODO1_CAEBR</name>
<keyword id="KW-0324">Glycolysis</keyword>
<keyword id="KW-0460">Magnesium</keyword>
<keyword id="KW-0479">Metal-binding</keyword>
<keyword id="KW-0496">Mitochondrion</keyword>
<keyword id="KW-0560">Oxidoreductase</keyword>
<keyword id="KW-1185">Reference proteome</keyword>
<keyword id="KW-0786">Thiamine pyrophosphate</keyword>
<keyword id="KW-0809">Transit peptide</keyword>
<accession>Q623T0</accession>
<accession>A8WQY9</accession>
<reference key="1">
    <citation type="journal article" date="2003" name="PLoS Biol.">
        <title>The genome sequence of Caenorhabditis briggsae: a platform for comparative genomics.</title>
        <authorList>
            <person name="Stein L.D."/>
            <person name="Bao Z."/>
            <person name="Blasiar D."/>
            <person name="Blumenthal T."/>
            <person name="Brent M.R."/>
            <person name="Chen N."/>
            <person name="Chinwalla A."/>
            <person name="Clarke L."/>
            <person name="Clee C."/>
            <person name="Coghlan A."/>
            <person name="Coulson A."/>
            <person name="D'Eustachio P."/>
            <person name="Fitch D.H.A."/>
            <person name="Fulton L.A."/>
            <person name="Fulton R.E."/>
            <person name="Griffiths-Jones S."/>
            <person name="Harris T.W."/>
            <person name="Hillier L.W."/>
            <person name="Kamath R."/>
            <person name="Kuwabara P.E."/>
            <person name="Mardis E.R."/>
            <person name="Marra M.A."/>
            <person name="Miner T.L."/>
            <person name="Minx P."/>
            <person name="Mullikin J.C."/>
            <person name="Plumb R.W."/>
            <person name="Rogers J."/>
            <person name="Schein J.E."/>
            <person name="Sohrmann M."/>
            <person name="Spieth J."/>
            <person name="Stajich J.E."/>
            <person name="Wei C."/>
            <person name="Willey D."/>
            <person name="Wilson R.K."/>
            <person name="Durbin R.M."/>
            <person name="Waterston R.H."/>
        </authorList>
    </citation>
    <scope>NUCLEOTIDE SEQUENCE [LARGE SCALE GENOMIC DNA]</scope>
    <source>
        <strain>AF16</strain>
    </source>
</reference>
<proteinExistence type="inferred from homology"/>
<feature type="transit peptide" description="Mitochondrion" evidence="3">
    <location>
        <begin position="1"/>
        <end status="unknown"/>
    </location>
</feature>
<feature type="chain" id="PRO_0000234099" description="2-oxoglutarate dehydrogenase, mitochondrial">
    <location>
        <begin status="unknown"/>
        <end position="1027"/>
    </location>
</feature>
<feature type="binding site" evidence="2">
    <location>
        <position position="315"/>
    </location>
    <ligand>
        <name>thiamine diphosphate</name>
        <dbReference type="ChEBI" id="CHEBI:58937"/>
    </ligand>
</feature>
<feature type="binding site" evidence="2">
    <location>
        <position position="413"/>
    </location>
    <ligand>
        <name>Mg(2+)</name>
        <dbReference type="ChEBI" id="CHEBI:18420"/>
    </ligand>
</feature>
<feature type="binding site" evidence="2">
    <location>
        <position position="413"/>
    </location>
    <ligand>
        <name>thiamine diphosphate</name>
        <dbReference type="ChEBI" id="CHEBI:58937"/>
    </ligand>
</feature>
<feature type="binding site" evidence="2">
    <location>
        <position position="446"/>
    </location>
    <ligand>
        <name>Mg(2+)</name>
        <dbReference type="ChEBI" id="CHEBI:18420"/>
    </ligand>
</feature>
<feature type="binding site" evidence="2">
    <location>
        <position position="446"/>
    </location>
    <ligand>
        <name>thiamine diphosphate</name>
        <dbReference type="ChEBI" id="CHEBI:58937"/>
    </ligand>
</feature>
<feature type="binding site" evidence="2">
    <location>
        <position position="448"/>
    </location>
    <ligand>
        <name>Mg(2+)</name>
        <dbReference type="ChEBI" id="CHEBI:18420"/>
    </ligand>
</feature>
<feature type="binding site" evidence="2">
    <location>
        <position position="448"/>
    </location>
    <ligand>
        <name>thiamine diphosphate</name>
        <dbReference type="ChEBI" id="CHEBI:58937"/>
    </ligand>
</feature>
<feature type="binding site" evidence="2">
    <location>
        <position position="674"/>
    </location>
    <ligand>
        <name>thiamine diphosphate</name>
        <dbReference type="ChEBI" id="CHEBI:58937"/>
    </ligand>
</feature>
<dbReference type="EC" id="1.2.4.2"/>
<dbReference type="EMBL" id="HE601298">
    <property type="protein sequence ID" value="CAP22897.1"/>
    <property type="molecule type" value="Genomic_DNA"/>
</dbReference>
<dbReference type="SMR" id="Q623T0"/>
<dbReference type="FunCoup" id="Q623T0">
    <property type="interactions" value="1632"/>
</dbReference>
<dbReference type="STRING" id="6238.Q623T0"/>
<dbReference type="EnsemblMetazoa" id="CBG01737.1">
    <property type="protein sequence ID" value="CBG01737.1"/>
    <property type="gene ID" value="WBGene00024926"/>
</dbReference>
<dbReference type="KEGG" id="cbr:CBG_01737"/>
<dbReference type="CTD" id="8576165"/>
<dbReference type="WormBase" id="CBG01737">
    <property type="protein sequence ID" value="CBP00459"/>
    <property type="gene ID" value="WBGene00024926"/>
    <property type="gene designation" value="Cbr-ogdh-1"/>
</dbReference>
<dbReference type="eggNOG" id="KOG0450">
    <property type="taxonomic scope" value="Eukaryota"/>
</dbReference>
<dbReference type="HOGENOM" id="CLU_004709_1_1_1"/>
<dbReference type="InParanoid" id="Q623T0"/>
<dbReference type="OMA" id="RDSYCRT"/>
<dbReference type="Proteomes" id="UP000008549">
    <property type="component" value="Unassembled WGS sequence"/>
</dbReference>
<dbReference type="GO" id="GO:0005759">
    <property type="term" value="C:mitochondrial matrix"/>
    <property type="evidence" value="ECO:0007669"/>
    <property type="project" value="UniProtKB-SubCell"/>
</dbReference>
<dbReference type="GO" id="GO:0031966">
    <property type="term" value="C:mitochondrial membrane"/>
    <property type="evidence" value="ECO:0000250"/>
    <property type="project" value="UniProtKB"/>
</dbReference>
<dbReference type="GO" id="GO:0005739">
    <property type="term" value="C:mitochondrion"/>
    <property type="evidence" value="ECO:0000318"/>
    <property type="project" value="GO_Central"/>
</dbReference>
<dbReference type="GO" id="GO:0045252">
    <property type="term" value="C:oxoglutarate dehydrogenase complex"/>
    <property type="evidence" value="ECO:0000318"/>
    <property type="project" value="GO_Central"/>
</dbReference>
<dbReference type="GO" id="GO:0046872">
    <property type="term" value="F:metal ion binding"/>
    <property type="evidence" value="ECO:0007669"/>
    <property type="project" value="UniProtKB-KW"/>
</dbReference>
<dbReference type="GO" id="GO:0004591">
    <property type="term" value="F:oxoglutarate dehydrogenase (succinyl-transferring) activity"/>
    <property type="evidence" value="ECO:0000250"/>
    <property type="project" value="UniProtKB"/>
</dbReference>
<dbReference type="GO" id="GO:0030976">
    <property type="term" value="F:thiamine pyrophosphate binding"/>
    <property type="evidence" value="ECO:0007669"/>
    <property type="project" value="InterPro"/>
</dbReference>
<dbReference type="GO" id="GO:0006091">
    <property type="term" value="P:generation of precursor metabolites and energy"/>
    <property type="evidence" value="ECO:0000250"/>
    <property type="project" value="UniProtKB"/>
</dbReference>
<dbReference type="GO" id="GO:0006096">
    <property type="term" value="P:glycolytic process"/>
    <property type="evidence" value="ECO:0007669"/>
    <property type="project" value="UniProtKB-KW"/>
</dbReference>
<dbReference type="GO" id="GO:0006457">
    <property type="term" value="P:protein folding"/>
    <property type="evidence" value="ECO:0007669"/>
    <property type="project" value="EnsemblMetazoa"/>
</dbReference>
<dbReference type="GO" id="GO:0006099">
    <property type="term" value="P:tricarboxylic acid cycle"/>
    <property type="evidence" value="ECO:0000318"/>
    <property type="project" value="GO_Central"/>
</dbReference>
<dbReference type="CDD" id="cd02016">
    <property type="entry name" value="TPP_E1_OGDC_like"/>
    <property type="match status" value="1"/>
</dbReference>
<dbReference type="FunFam" id="1.10.287.1150:FF:000002">
    <property type="entry name" value="2-oxoglutarate dehydrogenase E1 component"/>
    <property type="match status" value="1"/>
</dbReference>
<dbReference type="FunFam" id="3.40.50.12470:FF:000007">
    <property type="entry name" value="2-oxoglutarate dehydrogenase e1 mitochondrial"/>
    <property type="match status" value="1"/>
</dbReference>
<dbReference type="FunFam" id="3.40.50.970:FF:000063">
    <property type="entry name" value="2-oxoglutarate dehydrogenase, mitochondrial"/>
    <property type="match status" value="1"/>
</dbReference>
<dbReference type="Gene3D" id="3.40.50.12470">
    <property type="match status" value="1"/>
</dbReference>
<dbReference type="Gene3D" id="3.40.50.970">
    <property type="match status" value="1"/>
</dbReference>
<dbReference type="Gene3D" id="3.40.50.11610">
    <property type="entry name" value="Multifunctional 2-oxoglutarate metabolism enzyme, C-terminal domain"/>
    <property type="match status" value="1"/>
</dbReference>
<dbReference type="Gene3D" id="1.10.287.1150">
    <property type="entry name" value="TPP helical domain"/>
    <property type="match status" value="1"/>
</dbReference>
<dbReference type="InterPro" id="IPR032106">
    <property type="entry name" value="2-oxogl_dehyd_N"/>
</dbReference>
<dbReference type="InterPro" id="IPR011603">
    <property type="entry name" value="2oxoglutarate_DH_E1"/>
</dbReference>
<dbReference type="InterPro" id="IPR001017">
    <property type="entry name" value="DH_E1"/>
</dbReference>
<dbReference type="InterPro" id="IPR042179">
    <property type="entry name" value="KGD_C_sf"/>
</dbReference>
<dbReference type="InterPro" id="IPR031717">
    <property type="entry name" value="ODO-1/KGD_C"/>
</dbReference>
<dbReference type="InterPro" id="IPR029061">
    <property type="entry name" value="THDP-binding"/>
</dbReference>
<dbReference type="InterPro" id="IPR005475">
    <property type="entry name" value="Transketolase-like_Pyr-bd"/>
</dbReference>
<dbReference type="NCBIfam" id="TIGR00239">
    <property type="entry name" value="2oxo_dh_E1"/>
    <property type="match status" value="1"/>
</dbReference>
<dbReference type="NCBIfam" id="NF006914">
    <property type="entry name" value="PRK09404.1"/>
    <property type="match status" value="1"/>
</dbReference>
<dbReference type="PANTHER" id="PTHR23152:SF4">
    <property type="entry name" value="2-OXOADIPATE DEHYDROGENASE COMPLEX COMPONENT E1"/>
    <property type="match status" value="1"/>
</dbReference>
<dbReference type="PANTHER" id="PTHR23152">
    <property type="entry name" value="2-OXOGLUTARATE DEHYDROGENASE"/>
    <property type="match status" value="1"/>
</dbReference>
<dbReference type="Pfam" id="PF16078">
    <property type="entry name" value="2-oxogl_dehyd_N"/>
    <property type="match status" value="1"/>
</dbReference>
<dbReference type="Pfam" id="PF00676">
    <property type="entry name" value="E1_dh"/>
    <property type="match status" value="1"/>
</dbReference>
<dbReference type="Pfam" id="PF16870">
    <property type="entry name" value="OxoGdeHyase_C"/>
    <property type="match status" value="1"/>
</dbReference>
<dbReference type="Pfam" id="PF02779">
    <property type="entry name" value="Transket_pyr"/>
    <property type="match status" value="1"/>
</dbReference>
<dbReference type="PIRSF" id="PIRSF000157">
    <property type="entry name" value="Oxoglu_dh_E1"/>
    <property type="match status" value="1"/>
</dbReference>
<dbReference type="SMART" id="SM00861">
    <property type="entry name" value="Transket_pyr"/>
    <property type="match status" value="1"/>
</dbReference>
<dbReference type="SUPFAM" id="SSF52518">
    <property type="entry name" value="Thiamin diphosphate-binding fold (THDP-binding)"/>
    <property type="match status" value="2"/>
</dbReference>
<organism>
    <name type="scientific">Caenorhabditis briggsae</name>
    <dbReference type="NCBI Taxonomy" id="6238"/>
    <lineage>
        <taxon>Eukaryota</taxon>
        <taxon>Metazoa</taxon>
        <taxon>Ecdysozoa</taxon>
        <taxon>Nematoda</taxon>
        <taxon>Chromadorea</taxon>
        <taxon>Rhabditida</taxon>
        <taxon>Rhabditina</taxon>
        <taxon>Rhabditomorpha</taxon>
        <taxon>Rhabditoidea</taxon>
        <taxon>Rhabditidae</taxon>
        <taxon>Peloderinae</taxon>
        <taxon>Caenorhabditis</taxon>
    </lineage>
</organism>
<sequence length="1027" mass="115481">MHRASLICRLASPSRINSIRSASSYGNNTISATPLVQQRKQSVAASVKHEPFLNGSSSVYIEQMYETWLENPSSVHTSWDAYFRNVEAGAGPGQAFQAPPSVAYAGSMGVPSAPITSAAPATRLDTNASVQSISDHLKIQLLIRSYQTRGHNIADLDPLGINSADLDDTIPPELELSFYGLGERDLDREFLLPPTTFISEKKSLTLREILQRLKEIYCTSTGVEYMHLNNLEQQDWIRRRFEAPRVTELSHDQKKVLFKRLIRSTKFEEFLAKKWPSEKRFGLEGCEVLIPAIKQVIDSSSTLGVDSFVIGMPHRGRLNVLANVCRQPLATILSQFSTLEPADEGSGDVKYHLGVCIERLNRQSQKNVKIAVVANPSHLEAVDPVVMGKVRAEAFYAGDEKCDRTMAILLHGDAAFAGQGVVLETFNLDDLPSYTTHGAIHIVVNNQIGFTTDPRSSRSSPYCTDVGRVVGCPIFHVNVDDPEAVMHVCNVAADWRKTFKKDVIVDLVCYRRHGHNELDEPMFTQPLMYQRIKQTKTALEKYQEKILNEGVANEQYVKEELTKYGAILEDAYENAQKVTYVRNRDWLDSPWDDFFKKRDPLKLPSTGIEQENIEHIIGKFGSYPEGFNLHRGLERTLKGRQQMLKDNSLDWACGEALAFGSLLKEGIHVRLSGQDVERGTFSHRHHVLHDQKVDQKIYNPLNDLADPQGEYTVCNSSLSEYAVLGFELGYSMVDPNSLVIWEAQFGDFSNTAQCIIDQFVSSGQSKWIRQSGLVMLLPHGYEGMGPEHSSARPERFLQMCNEDDEIDLDKIAFGGTFEAQQLHDTNWIVANCTTPANIYHLLRRQVTMPFRKPAVVFSPKSLLRHPMARSPVEDFQSGSNFQRIIPETGAPSQNPPNVQRLVFCTGKVYYDMVAARKHVGKENDVALVRVEQLSPFPYDLVQQECRKYQGAEIIWAQEEHKNMGAWSFVQPRINSLLSIDGRATKYAGRLPSSSPATGNKYTHMQEQKEMMSKVFGVPKSKLEGFKA</sequence>
<gene>
    <name type="primary">ogdh-1</name>
    <name type="ORF">CBG01737</name>
</gene>
<protein>
    <recommendedName>
        <fullName>2-oxoglutarate dehydrogenase, mitochondrial</fullName>
        <ecNumber>1.2.4.2</ecNumber>
    </recommendedName>
    <alternativeName>
        <fullName>2-oxoglutarate dehydrogenase complex component E1</fullName>
        <shortName>OGDC-E1</shortName>
    </alternativeName>
    <alternativeName>
        <fullName>Alpha-ketoglutarate dehydrogenase</fullName>
    </alternativeName>
</protein>
<comment type="function">
    <text evidence="2">The 2-oxoglutarate dehydrogenase complex catalyzes the overall conversion of 2-oxoglutarate to succinyl-CoA and CO(2). It contains multiple copies of three enzymatic components: 2-oxoglutarate dehydrogenase (E1), dihydrolipoamide succinyltransferase (E2) and lipoamide dehydrogenase (E3) (By similarity).</text>
</comment>
<comment type="catalytic activity">
    <reaction evidence="2">
        <text>N(6)-[(R)-lipoyl]-L-lysyl-[protein] + 2-oxoglutarate + H(+) = N(6)-[(R)-S(8)-succinyldihydrolipoyl]-L-lysyl-[protein] + CO2</text>
        <dbReference type="Rhea" id="RHEA:12188"/>
        <dbReference type="Rhea" id="RHEA-COMP:10474"/>
        <dbReference type="Rhea" id="RHEA-COMP:20092"/>
        <dbReference type="ChEBI" id="CHEBI:15378"/>
        <dbReference type="ChEBI" id="CHEBI:16526"/>
        <dbReference type="ChEBI" id="CHEBI:16810"/>
        <dbReference type="ChEBI" id="CHEBI:83099"/>
        <dbReference type="ChEBI" id="CHEBI:83120"/>
        <dbReference type="EC" id="1.2.4.2"/>
    </reaction>
</comment>
<comment type="cofactor">
    <cofactor evidence="2">
        <name>thiamine diphosphate</name>
        <dbReference type="ChEBI" id="CHEBI:58937"/>
    </cofactor>
    <cofactor evidence="2">
        <name>Mg(2+)</name>
        <dbReference type="ChEBI" id="CHEBI:18420"/>
    </cofactor>
</comment>
<comment type="subunit">
    <text evidence="2">Homodimer (By similarity). Component of the 2-oxoglutarate dehydrogenase complex (By similarity).</text>
</comment>
<comment type="subcellular location">
    <subcellularLocation>
        <location evidence="1">Mitochondrion matrix</location>
    </subcellularLocation>
</comment>
<comment type="similarity">
    <text evidence="4">Belongs to the alpha-ketoglutarate dehydrogenase family.</text>
</comment>
<evidence type="ECO:0000250" key="1"/>
<evidence type="ECO:0000250" key="2">
    <source>
        <dbReference type="UniProtKB" id="Q02218"/>
    </source>
</evidence>
<evidence type="ECO:0000255" key="3"/>
<evidence type="ECO:0000305" key="4"/>